<dbReference type="EC" id="2.7.1.24" evidence="1"/>
<dbReference type="EMBL" id="BA000035">
    <property type="protein sequence ID" value="BAC18269.1"/>
    <property type="molecule type" value="Genomic_DNA"/>
</dbReference>
<dbReference type="RefSeq" id="WP_006769420.1">
    <property type="nucleotide sequence ID" value="NC_004369.1"/>
</dbReference>
<dbReference type="SMR" id="Q8FPN2"/>
<dbReference type="STRING" id="196164.gene:10741874"/>
<dbReference type="KEGG" id="cef:CE1459"/>
<dbReference type="eggNOG" id="COG0237">
    <property type="taxonomic scope" value="Bacteria"/>
</dbReference>
<dbReference type="HOGENOM" id="CLU_057180_2_1_11"/>
<dbReference type="OrthoDB" id="9812943at2"/>
<dbReference type="UniPathway" id="UPA00241">
    <property type="reaction ID" value="UER00356"/>
</dbReference>
<dbReference type="Proteomes" id="UP000001409">
    <property type="component" value="Chromosome"/>
</dbReference>
<dbReference type="GO" id="GO:0005737">
    <property type="term" value="C:cytoplasm"/>
    <property type="evidence" value="ECO:0007669"/>
    <property type="project" value="UniProtKB-SubCell"/>
</dbReference>
<dbReference type="GO" id="GO:0005524">
    <property type="term" value="F:ATP binding"/>
    <property type="evidence" value="ECO:0007669"/>
    <property type="project" value="UniProtKB-UniRule"/>
</dbReference>
<dbReference type="GO" id="GO:0004140">
    <property type="term" value="F:dephospho-CoA kinase activity"/>
    <property type="evidence" value="ECO:0007669"/>
    <property type="project" value="UniProtKB-UniRule"/>
</dbReference>
<dbReference type="GO" id="GO:0015937">
    <property type="term" value="P:coenzyme A biosynthetic process"/>
    <property type="evidence" value="ECO:0007669"/>
    <property type="project" value="UniProtKB-UniRule"/>
</dbReference>
<dbReference type="CDD" id="cd02022">
    <property type="entry name" value="DPCK"/>
    <property type="match status" value="1"/>
</dbReference>
<dbReference type="Gene3D" id="3.40.50.300">
    <property type="entry name" value="P-loop containing nucleotide triphosphate hydrolases"/>
    <property type="match status" value="1"/>
</dbReference>
<dbReference type="HAMAP" id="MF_00376">
    <property type="entry name" value="Dephospho_CoA_kinase"/>
    <property type="match status" value="1"/>
</dbReference>
<dbReference type="InterPro" id="IPR001977">
    <property type="entry name" value="Depp_CoAkinase"/>
</dbReference>
<dbReference type="InterPro" id="IPR027417">
    <property type="entry name" value="P-loop_NTPase"/>
</dbReference>
<dbReference type="NCBIfam" id="TIGR00152">
    <property type="entry name" value="dephospho-CoA kinase"/>
    <property type="match status" value="1"/>
</dbReference>
<dbReference type="NCBIfam" id="NF002879">
    <property type="entry name" value="PRK03333.1"/>
    <property type="match status" value="1"/>
</dbReference>
<dbReference type="PANTHER" id="PTHR10695:SF46">
    <property type="entry name" value="BIFUNCTIONAL COENZYME A SYNTHASE-RELATED"/>
    <property type="match status" value="1"/>
</dbReference>
<dbReference type="PANTHER" id="PTHR10695">
    <property type="entry name" value="DEPHOSPHO-COA KINASE-RELATED"/>
    <property type="match status" value="1"/>
</dbReference>
<dbReference type="Pfam" id="PF01121">
    <property type="entry name" value="CoaE"/>
    <property type="match status" value="1"/>
</dbReference>
<dbReference type="SUPFAM" id="SSF52540">
    <property type="entry name" value="P-loop containing nucleoside triphosphate hydrolases"/>
    <property type="match status" value="1"/>
</dbReference>
<dbReference type="PROSITE" id="PS51219">
    <property type="entry name" value="DPCK"/>
    <property type="match status" value="1"/>
</dbReference>
<keyword id="KW-0067">ATP-binding</keyword>
<keyword id="KW-0173">Coenzyme A biosynthesis</keyword>
<keyword id="KW-0963">Cytoplasm</keyword>
<keyword id="KW-0418">Kinase</keyword>
<keyword id="KW-0547">Nucleotide-binding</keyword>
<keyword id="KW-1185">Reference proteome</keyword>
<keyword id="KW-0808">Transferase</keyword>
<evidence type="ECO:0000255" key="1">
    <source>
        <dbReference type="HAMAP-Rule" id="MF_00376"/>
    </source>
</evidence>
<name>COAE_COREF</name>
<organism>
    <name type="scientific">Corynebacterium efficiens (strain DSM 44549 / YS-314 / AJ 12310 / JCM 11189 / NBRC 100395)</name>
    <dbReference type="NCBI Taxonomy" id="196164"/>
    <lineage>
        <taxon>Bacteria</taxon>
        <taxon>Bacillati</taxon>
        <taxon>Actinomycetota</taxon>
        <taxon>Actinomycetes</taxon>
        <taxon>Mycobacteriales</taxon>
        <taxon>Corynebacteriaceae</taxon>
        <taxon>Corynebacterium</taxon>
    </lineage>
</organism>
<accession>Q8FPN2</accession>
<protein>
    <recommendedName>
        <fullName evidence="1">Dephospho-CoA kinase</fullName>
        <ecNumber evidence="1">2.7.1.24</ecNumber>
    </recommendedName>
    <alternativeName>
        <fullName evidence="1">Dephosphocoenzyme A kinase</fullName>
    </alternativeName>
</protein>
<proteinExistence type="inferred from homology"/>
<sequence length="200" mass="21602">MLRIGLTGGIGSGKSTVADLLSAEGFLIIDADAIARDIVEPGQPALAELVEAFGEDILNPDGTLNRPGLAAKAFVSSEQTALLNSITHPRIAEETARRFAEAEAAGTKAAVYDMPLLVDKGLDRTMDLVVVVDVEEDERVRRLVAKRGLEEDDVRRRIASQVPDEIRLKAADIVIDNNGPVENLRAQADRLIAEILTRIK</sequence>
<reference key="1">
    <citation type="journal article" date="2003" name="Genome Res.">
        <title>Comparative complete genome sequence analysis of the amino acid replacements responsible for the thermostability of Corynebacterium efficiens.</title>
        <authorList>
            <person name="Nishio Y."/>
            <person name="Nakamura Y."/>
            <person name="Kawarabayasi Y."/>
            <person name="Usuda Y."/>
            <person name="Kimura E."/>
            <person name="Sugimoto S."/>
            <person name="Matsui K."/>
            <person name="Yamagishi A."/>
            <person name="Kikuchi H."/>
            <person name="Ikeo K."/>
            <person name="Gojobori T."/>
        </authorList>
    </citation>
    <scope>NUCLEOTIDE SEQUENCE [LARGE SCALE GENOMIC DNA]</scope>
    <source>
        <strain>DSM 44549 / YS-314 / AJ 12310 / JCM 11189 / NBRC 100395</strain>
    </source>
</reference>
<gene>
    <name evidence="1" type="primary">coaE</name>
    <name type="ordered locus">CE1459</name>
</gene>
<feature type="chain" id="PRO_0000172935" description="Dephospho-CoA kinase">
    <location>
        <begin position="1"/>
        <end position="200"/>
    </location>
</feature>
<feature type="domain" description="DPCK" evidence="1">
    <location>
        <begin position="3"/>
        <end position="200"/>
    </location>
</feature>
<feature type="binding site" evidence="1">
    <location>
        <begin position="11"/>
        <end position="16"/>
    </location>
    <ligand>
        <name>ATP</name>
        <dbReference type="ChEBI" id="CHEBI:30616"/>
    </ligand>
</feature>
<comment type="function">
    <text evidence="1">Catalyzes the phosphorylation of the 3'-hydroxyl group of dephosphocoenzyme A to form coenzyme A.</text>
</comment>
<comment type="catalytic activity">
    <reaction evidence="1">
        <text>3'-dephospho-CoA + ATP = ADP + CoA + H(+)</text>
        <dbReference type="Rhea" id="RHEA:18245"/>
        <dbReference type="ChEBI" id="CHEBI:15378"/>
        <dbReference type="ChEBI" id="CHEBI:30616"/>
        <dbReference type="ChEBI" id="CHEBI:57287"/>
        <dbReference type="ChEBI" id="CHEBI:57328"/>
        <dbReference type="ChEBI" id="CHEBI:456216"/>
        <dbReference type="EC" id="2.7.1.24"/>
    </reaction>
</comment>
<comment type="pathway">
    <text evidence="1">Cofactor biosynthesis; coenzyme A biosynthesis; CoA from (R)-pantothenate: step 5/5.</text>
</comment>
<comment type="subcellular location">
    <subcellularLocation>
        <location evidence="1">Cytoplasm</location>
    </subcellularLocation>
</comment>
<comment type="similarity">
    <text evidence="1">Belongs to the CoaE family.</text>
</comment>